<protein>
    <recommendedName>
        <fullName evidence="1">UvrABC system protein B</fullName>
        <shortName evidence="1">Protein UvrB</shortName>
    </recommendedName>
    <alternativeName>
        <fullName evidence="1">Excinuclease ABC subunit B</fullName>
    </alternativeName>
</protein>
<name>UVRB_YERPP</name>
<proteinExistence type="inferred from homology"/>
<reference key="1">
    <citation type="submission" date="2007-02" db="EMBL/GenBank/DDBJ databases">
        <title>Complete sequence of chromosome of Yersinia pestis Pestoides F.</title>
        <authorList>
            <consortium name="US DOE Joint Genome Institute"/>
            <person name="Copeland A."/>
            <person name="Lucas S."/>
            <person name="Lapidus A."/>
            <person name="Barry K."/>
            <person name="Detter J.C."/>
            <person name="Glavina del Rio T."/>
            <person name="Hammon N."/>
            <person name="Israni S."/>
            <person name="Dalin E."/>
            <person name="Tice H."/>
            <person name="Pitluck S."/>
            <person name="Di Bartolo G."/>
            <person name="Chain P."/>
            <person name="Malfatti S."/>
            <person name="Shin M."/>
            <person name="Vergez L."/>
            <person name="Schmutz J."/>
            <person name="Larimer F."/>
            <person name="Land M."/>
            <person name="Hauser L."/>
            <person name="Worsham P."/>
            <person name="Chu M."/>
            <person name="Bearden S."/>
            <person name="Garcia E."/>
            <person name="Richardson P."/>
        </authorList>
    </citation>
    <scope>NUCLEOTIDE SEQUENCE [LARGE SCALE GENOMIC DNA]</scope>
    <source>
        <strain>Pestoides F</strain>
    </source>
</reference>
<keyword id="KW-0067">ATP-binding</keyword>
<keyword id="KW-0963">Cytoplasm</keyword>
<keyword id="KW-0227">DNA damage</keyword>
<keyword id="KW-0228">DNA excision</keyword>
<keyword id="KW-0234">DNA repair</keyword>
<keyword id="KW-0267">Excision nuclease</keyword>
<keyword id="KW-0347">Helicase</keyword>
<keyword id="KW-0378">Hydrolase</keyword>
<keyword id="KW-0547">Nucleotide-binding</keyword>
<keyword id="KW-0742">SOS response</keyword>
<sequence length="671" mass="76345">MSKSFKLHSVFKPAGDQPEAIRKLEEGLENGLAHQTLLGVTGSGKTFTVANVIADLNRPTMILAPNKTLAAQLYGEMKEFFPDNAVEYFVSYYDYYQPEAYVPSSDTFIEKDASVNEHIEQMRLSATKALLERRDVVVVASVSAIYGLGDPDLYLKMMLHLTRGMIIDQRSILRRLSELQYSRNDQVFQRGTFRVRGEVIDIFPAESDEWALRVELFDEEVERLSIFDPLTGQLQHEVPRFTVYPKTHYVTPRERILQAMEEIKVELAERRQVLLANNKLLEEQRLSQRTQFDLEMMNELGYCSGIENYSRYLSGRGPGEAPPTLFDYLPADGLLIVDESHVTIPQIGGMYKGDRSRKETLVEYGFRLPSALDNRPMRFEEFEALAPQTIYVSATPGKYELEKSGGDIIEQVVRPTGLLDPLIEVRPVATQVDDLLSEIRIRAAINERVLVTTLTKRMAEDLTDYLSEHGAKVRYLHSDIDTVERVEIIRDLRLGEFDVLVGINLLREGLDMPEVSLVAILDADKEGFLRSERSLIQTIGRAARNLNGKAILYGDRITASMEKAIGETERRRAKQQAYNEERRIIPQGLNKKIGDILQLGQPSMRGKGKGRGSHKMADTTQYQSLSPKALDQKIRELEAKMYTYAQNLEFEQAAELRDQVHQLRQQFIAIS</sequence>
<gene>
    <name evidence="1" type="primary">uvrB</name>
    <name type="ordered locus">YPDSF_2541</name>
</gene>
<comment type="function">
    <text evidence="1">The UvrABC repair system catalyzes the recognition and processing of DNA lesions. A damage recognition complex composed of 2 UvrA and 2 UvrB subunits scans DNA for abnormalities. Upon binding of the UvrA(2)B(2) complex to a putative damaged site, the DNA wraps around one UvrB monomer. DNA wrap is dependent on ATP binding by UvrB and probably causes local melting of the DNA helix, facilitating insertion of UvrB beta-hairpin between the DNA strands. Then UvrB probes one DNA strand for the presence of a lesion. If a lesion is found the UvrA subunits dissociate and the UvrB-DNA preincision complex is formed. This complex is subsequently bound by UvrC and the second UvrB is released. If no lesion is found, the DNA wraps around the other UvrB subunit that will check the other stand for damage.</text>
</comment>
<comment type="subunit">
    <text evidence="1">Forms a heterotetramer with UvrA during the search for lesions. Interacts with UvrC in an incision complex.</text>
</comment>
<comment type="subcellular location">
    <subcellularLocation>
        <location evidence="1">Cytoplasm</location>
    </subcellularLocation>
</comment>
<comment type="domain">
    <text evidence="1">The beta-hairpin motif is involved in DNA binding.</text>
</comment>
<comment type="similarity">
    <text evidence="1">Belongs to the UvrB family.</text>
</comment>
<accession>A4TNQ1</accession>
<feature type="chain" id="PRO_1000077947" description="UvrABC system protein B">
    <location>
        <begin position="1"/>
        <end position="671"/>
    </location>
</feature>
<feature type="domain" description="Helicase ATP-binding" evidence="1">
    <location>
        <begin position="26"/>
        <end position="183"/>
    </location>
</feature>
<feature type="domain" description="Helicase C-terminal" evidence="1">
    <location>
        <begin position="431"/>
        <end position="593"/>
    </location>
</feature>
<feature type="domain" description="UVR" evidence="1">
    <location>
        <begin position="631"/>
        <end position="666"/>
    </location>
</feature>
<feature type="short sequence motif" description="Beta-hairpin">
    <location>
        <begin position="92"/>
        <end position="115"/>
    </location>
</feature>
<feature type="binding site" evidence="1">
    <location>
        <begin position="39"/>
        <end position="46"/>
    </location>
    <ligand>
        <name>ATP</name>
        <dbReference type="ChEBI" id="CHEBI:30616"/>
    </ligand>
</feature>
<evidence type="ECO:0000255" key="1">
    <source>
        <dbReference type="HAMAP-Rule" id="MF_00204"/>
    </source>
</evidence>
<dbReference type="EMBL" id="CP000668">
    <property type="protein sequence ID" value="ABP40913.1"/>
    <property type="molecule type" value="Genomic_DNA"/>
</dbReference>
<dbReference type="RefSeq" id="WP_002210767.1">
    <property type="nucleotide sequence ID" value="NZ_CP009715.1"/>
</dbReference>
<dbReference type="SMR" id="A4TNQ1"/>
<dbReference type="GeneID" id="57977295"/>
<dbReference type="KEGG" id="ypp:YPDSF_2541"/>
<dbReference type="PATRIC" id="fig|386656.14.peg.4059"/>
<dbReference type="GO" id="GO:0005737">
    <property type="term" value="C:cytoplasm"/>
    <property type="evidence" value="ECO:0007669"/>
    <property type="project" value="UniProtKB-SubCell"/>
</dbReference>
<dbReference type="GO" id="GO:0009380">
    <property type="term" value="C:excinuclease repair complex"/>
    <property type="evidence" value="ECO:0007669"/>
    <property type="project" value="InterPro"/>
</dbReference>
<dbReference type="GO" id="GO:0005524">
    <property type="term" value="F:ATP binding"/>
    <property type="evidence" value="ECO:0007669"/>
    <property type="project" value="UniProtKB-UniRule"/>
</dbReference>
<dbReference type="GO" id="GO:0016887">
    <property type="term" value="F:ATP hydrolysis activity"/>
    <property type="evidence" value="ECO:0007669"/>
    <property type="project" value="InterPro"/>
</dbReference>
<dbReference type="GO" id="GO:0003677">
    <property type="term" value="F:DNA binding"/>
    <property type="evidence" value="ECO:0007669"/>
    <property type="project" value="UniProtKB-UniRule"/>
</dbReference>
<dbReference type="GO" id="GO:0009381">
    <property type="term" value="F:excinuclease ABC activity"/>
    <property type="evidence" value="ECO:0007669"/>
    <property type="project" value="UniProtKB-UniRule"/>
</dbReference>
<dbReference type="GO" id="GO:0004386">
    <property type="term" value="F:helicase activity"/>
    <property type="evidence" value="ECO:0007669"/>
    <property type="project" value="UniProtKB-KW"/>
</dbReference>
<dbReference type="GO" id="GO:0006289">
    <property type="term" value="P:nucleotide-excision repair"/>
    <property type="evidence" value="ECO:0007669"/>
    <property type="project" value="UniProtKB-UniRule"/>
</dbReference>
<dbReference type="GO" id="GO:0009432">
    <property type="term" value="P:SOS response"/>
    <property type="evidence" value="ECO:0007669"/>
    <property type="project" value="UniProtKB-UniRule"/>
</dbReference>
<dbReference type="CDD" id="cd17916">
    <property type="entry name" value="DEXHc_UvrB"/>
    <property type="match status" value="1"/>
</dbReference>
<dbReference type="CDD" id="cd18790">
    <property type="entry name" value="SF2_C_UvrB"/>
    <property type="match status" value="1"/>
</dbReference>
<dbReference type="FunFam" id="3.40.50.300:FF:000257">
    <property type="entry name" value="UvrABC system protein B"/>
    <property type="match status" value="1"/>
</dbReference>
<dbReference type="FunFam" id="3.40.50.300:FF:000401">
    <property type="entry name" value="UvrABC system protein B"/>
    <property type="match status" value="1"/>
</dbReference>
<dbReference type="FunFam" id="3.40.50.300:FF:000477">
    <property type="entry name" value="UvrABC system protein B"/>
    <property type="match status" value="1"/>
</dbReference>
<dbReference type="Gene3D" id="3.40.50.300">
    <property type="entry name" value="P-loop containing nucleotide triphosphate hydrolases"/>
    <property type="match status" value="3"/>
</dbReference>
<dbReference type="Gene3D" id="4.10.860.10">
    <property type="entry name" value="UVR domain"/>
    <property type="match status" value="1"/>
</dbReference>
<dbReference type="HAMAP" id="MF_00204">
    <property type="entry name" value="UvrB"/>
    <property type="match status" value="1"/>
</dbReference>
<dbReference type="InterPro" id="IPR006935">
    <property type="entry name" value="Helicase/UvrB_N"/>
</dbReference>
<dbReference type="InterPro" id="IPR014001">
    <property type="entry name" value="Helicase_ATP-bd"/>
</dbReference>
<dbReference type="InterPro" id="IPR001650">
    <property type="entry name" value="Helicase_C-like"/>
</dbReference>
<dbReference type="InterPro" id="IPR027417">
    <property type="entry name" value="P-loop_NTPase"/>
</dbReference>
<dbReference type="InterPro" id="IPR001943">
    <property type="entry name" value="UVR_dom"/>
</dbReference>
<dbReference type="InterPro" id="IPR036876">
    <property type="entry name" value="UVR_dom_sf"/>
</dbReference>
<dbReference type="InterPro" id="IPR004807">
    <property type="entry name" value="UvrB"/>
</dbReference>
<dbReference type="InterPro" id="IPR041471">
    <property type="entry name" value="UvrB_inter"/>
</dbReference>
<dbReference type="InterPro" id="IPR024759">
    <property type="entry name" value="UvrB_YAD/RRR_dom"/>
</dbReference>
<dbReference type="NCBIfam" id="NF003673">
    <property type="entry name" value="PRK05298.1"/>
    <property type="match status" value="1"/>
</dbReference>
<dbReference type="NCBIfam" id="TIGR00631">
    <property type="entry name" value="uvrb"/>
    <property type="match status" value="1"/>
</dbReference>
<dbReference type="PANTHER" id="PTHR24029">
    <property type="entry name" value="UVRABC SYSTEM PROTEIN B"/>
    <property type="match status" value="1"/>
</dbReference>
<dbReference type="PANTHER" id="PTHR24029:SF0">
    <property type="entry name" value="UVRABC SYSTEM PROTEIN B"/>
    <property type="match status" value="1"/>
</dbReference>
<dbReference type="Pfam" id="PF00271">
    <property type="entry name" value="Helicase_C"/>
    <property type="match status" value="1"/>
</dbReference>
<dbReference type="Pfam" id="PF04851">
    <property type="entry name" value="ResIII"/>
    <property type="match status" value="1"/>
</dbReference>
<dbReference type="Pfam" id="PF02151">
    <property type="entry name" value="UVR"/>
    <property type="match status" value="1"/>
</dbReference>
<dbReference type="Pfam" id="PF12344">
    <property type="entry name" value="UvrB"/>
    <property type="match status" value="1"/>
</dbReference>
<dbReference type="Pfam" id="PF17757">
    <property type="entry name" value="UvrB_inter"/>
    <property type="match status" value="1"/>
</dbReference>
<dbReference type="SMART" id="SM00487">
    <property type="entry name" value="DEXDc"/>
    <property type="match status" value="1"/>
</dbReference>
<dbReference type="SMART" id="SM00490">
    <property type="entry name" value="HELICc"/>
    <property type="match status" value="1"/>
</dbReference>
<dbReference type="SUPFAM" id="SSF46600">
    <property type="entry name" value="C-terminal UvrC-binding domain of UvrB"/>
    <property type="match status" value="1"/>
</dbReference>
<dbReference type="SUPFAM" id="SSF52540">
    <property type="entry name" value="P-loop containing nucleoside triphosphate hydrolases"/>
    <property type="match status" value="2"/>
</dbReference>
<dbReference type="PROSITE" id="PS51192">
    <property type="entry name" value="HELICASE_ATP_BIND_1"/>
    <property type="match status" value="1"/>
</dbReference>
<dbReference type="PROSITE" id="PS51194">
    <property type="entry name" value="HELICASE_CTER"/>
    <property type="match status" value="1"/>
</dbReference>
<dbReference type="PROSITE" id="PS50151">
    <property type="entry name" value="UVR"/>
    <property type="match status" value="1"/>
</dbReference>
<organism>
    <name type="scientific">Yersinia pestis (strain Pestoides F)</name>
    <dbReference type="NCBI Taxonomy" id="386656"/>
    <lineage>
        <taxon>Bacteria</taxon>
        <taxon>Pseudomonadati</taxon>
        <taxon>Pseudomonadota</taxon>
        <taxon>Gammaproteobacteria</taxon>
        <taxon>Enterobacterales</taxon>
        <taxon>Yersiniaceae</taxon>
        <taxon>Yersinia</taxon>
    </lineage>
</organism>